<organism>
    <name type="scientific">Sinorhizobium fredii (strain NBRC 101917 / NGR234)</name>
    <dbReference type="NCBI Taxonomy" id="394"/>
    <lineage>
        <taxon>Bacteria</taxon>
        <taxon>Pseudomonadati</taxon>
        <taxon>Pseudomonadota</taxon>
        <taxon>Alphaproteobacteria</taxon>
        <taxon>Hyphomicrobiales</taxon>
        <taxon>Rhizobiaceae</taxon>
        <taxon>Sinorhizobium/Ensifer group</taxon>
        <taxon>Sinorhizobium</taxon>
    </lineage>
</organism>
<evidence type="ECO:0000255" key="1">
    <source>
        <dbReference type="PROSITE-ProRule" id="PRU00457"/>
    </source>
</evidence>
<accession>P55646</accession>
<sequence length="350" mass="39381">MARRISMATRTELVEAIIERYRSSCRADKQRILDEFVAVTGYHRKHAIRVLRPSESEPPCARQYAVRYGPEVREALVALWEASDRLCSKRLKPLIPILLPALERHGRLDLSTELRDKLLTVSAATMDRLLSEIRVVARGGQRRRAGMSSAVRRSVPVRTFGDWNDPLPGYVEVDFVAHSGTSSSGSFVQTMVLTDIATGWTECVPVRTRESGLVIAALNQARSLFPFPLQGVDFDNDSAFMNERVVCWCRSQGLEVTRSRAYRKNDQAWVEQKNGAIVRRLVGYGRLVGAEATAALGRLYDVVRLYGNLFQPSFKLREKTRIGARVVKRYHPPVPPIARGGCPFRCGRGR</sequence>
<keyword id="KW-0614">Plasmid</keyword>
<keyword id="KW-1185">Reference proteome</keyword>
<geneLocation type="plasmid">
    <name>sym pNGR234a</name>
</geneLocation>
<reference key="1">
    <citation type="journal article" date="1997" name="Nature">
        <title>Molecular basis of symbiosis between Rhizobium and legumes.</title>
        <authorList>
            <person name="Freiberg C.A."/>
            <person name="Fellay R."/>
            <person name="Bairoch A."/>
            <person name="Broughton W.J."/>
            <person name="Rosenthal A."/>
            <person name="Perret X."/>
        </authorList>
    </citation>
    <scope>NUCLEOTIDE SEQUENCE [LARGE SCALE GENOMIC DNA]</scope>
    <source>
        <strain>NBRC 101917 / NGR234</strain>
    </source>
</reference>
<reference key="2">
    <citation type="journal article" date="2009" name="Appl. Environ. Microbiol.">
        <title>Rhizobium sp. strain NGR234 possesses a remarkable number of secretion systems.</title>
        <authorList>
            <person name="Schmeisser C."/>
            <person name="Liesegang H."/>
            <person name="Krysciak D."/>
            <person name="Bakkou N."/>
            <person name="Le Quere A."/>
            <person name="Wollherr A."/>
            <person name="Heinemeyer I."/>
            <person name="Morgenstern B."/>
            <person name="Pommerening-Roeser A."/>
            <person name="Flores M."/>
            <person name="Palacios R."/>
            <person name="Brenner S."/>
            <person name="Gottschalk G."/>
            <person name="Schmitz R.A."/>
            <person name="Broughton W.J."/>
            <person name="Perret X."/>
            <person name="Strittmatter A.W."/>
            <person name="Streit W.R."/>
        </authorList>
    </citation>
    <scope>NUCLEOTIDE SEQUENCE [LARGE SCALE GENOMIC DNA]</scope>
    <source>
        <strain>NBRC 101917 / NGR234</strain>
    </source>
</reference>
<dbReference type="EMBL" id="U00090">
    <property type="protein sequence ID" value="AAB91838.1"/>
    <property type="molecule type" value="Genomic_DNA"/>
</dbReference>
<dbReference type="RefSeq" id="NP_444051.1">
    <property type="nucleotide sequence ID" value="NC_000914.2"/>
</dbReference>
<dbReference type="KEGG" id="rhi:NGR_a01740"/>
<dbReference type="PATRIC" id="fig|394.7.peg.169"/>
<dbReference type="eggNOG" id="COG2801">
    <property type="taxonomic scope" value="Bacteria"/>
</dbReference>
<dbReference type="HOGENOM" id="CLU_029113_0_0_5"/>
<dbReference type="OrthoDB" id="8279294at2"/>
<dbReference type="Proteomes" id="UP000001054">
    <property type="component" value="Plasmid pNGR234a"/>
</dbReference>
<dbReference type="GO" id="GO:0003676">
    <property type="term" value="F:nucleic acid binding"/>
    <property type="evidence" value="ECO:0007669"/>
    <property type="project" value="InterPro"/>
</dbReference>
<dbReference type="GO" id="GO:0015074">
    <property type="term" value="P:DNA integration"/>
    <property type="evidence" value="ECO:0007669"/>
    <property type="project" value="InterPro"/>
</dbReference>
<dbReference type="Gene3D" id="3.30.420.10">
    <property type="entry name" value="Ribonuclease H-like superfamily/Ribonuclease H"/>
    <property type="match status" value="1"/>
</dbReference>
<dbReference type="InterPro" id="IPR001584">
    <property type="entry name" value="Integrase_cat-core"/>
</dbReference>
<dbReference type="InterPro" id="IPR012337">
    <property type="entry name" value="RNaseH-like_sf"/>
</dbReference>
<dbReference type="InterPro" id="IPR036397">
    <property type="entry name" value="RNaseH_sf"/>
</dbReference>
<dbReference type="Pfam" id="PF00665">
    <property type="entry name" value="rve"/>
    <property type="match status" value="1"/>
</dbReference>
<dbReference type="SUPFAM" id="SSF53098">
    <property type="entry name" value="Ribonuclease H-like"/>
    <property type="match status" value="1"/>
</dbReference>
<dbReference type="PROSITE" id="PS50994">
    <property type="entry name" value="INTEGRASE"/>
    <property type="match status" value="1"/>
</dbReference>
<name>Y4RM_SINFN</name>
<feature type="chain" id="PRO_0000200945" description="Uncharacterized protein y4rM">
    <location>
        <begin position="1"/>
        <end position="350"/>
    </location>
</feature>
<feature type="domain" description="Integrase catalytic" evidence="1">
    <location>
        <begin position="164"/>
        <end position="327"/>
    </location>
</feature>
<proteinExistence type="predicted"/>
<protein>
    <recommendedName>
        <fullName>Uncharacterized protein y4rM</fullName>
    </recommendedName>
</protein>
<gene>
    <name type="ordered locus">NGR_a01740</name>
    <name type="ORF">y4rM</name>
</gene>